<proteinExistence type="evidence at transcript level"/>
<dbReference type="EMBL" id="BX901962">
    <property type="protein sequence ID" value="CAI20680.2"/>
    <property type="molecule type" value="Genomic_DNA"/>
</dbReference>
<dbReference type="EMBL" id="BC076552">
    <property type="protein sequence ID" value="AAH76552.1"/>
    <property type="molecule type" value="mRNA"/>
</dbReference>
<dbReference type="RefSeq" id="NP_001002665.1">
    <molecule id="Q6DG03-1"/>
    <property type="nucleotide sequence ID" value="NM_001002665.1"/>
</dbReference>
<dbReference type="SMR" id="Q6DG03"/>
<dbReference type="FunCoup" id="Q6DG03">
    <property type="interactions" value="1055"/>
</dbReference>
<dbReference type="STRING" id="7955.ENSDARP00000028305"/>
<dbReference type="PaxDb" id="7955-ENSDARP00000028305"/>
<dbReference type="Ensembl" id="ENSDART00000029084">
    <molecule id="Q6DG03-1"/>
    <property type="protein sequence ID" value="ENSDARP00000028305"/>
    <property type="gene ID" value="ENSDARG00000025824"/>
</dbReference>
<dbReference type="Ensembl" id="ENSDART00000187373">
    <molecule id="Q6DG03-1"/>
    <property type="protein sequence ID" value="ENSDARP00000148434"/>
    <property type="gene ID" value="ENSDARG00000109819"/>
</dbReference>
<dbReference type="Ensembl" id="ENSDART00000189671">
    <molecule id="Q6DG03-1"/>
    <property type="protein sequence ID" value="ENSDARP00000145142"/>
    <property type="gene ID" value="ENSDARG00000025824"/>
</dbReference>
<dbReference type="GeneID" id="436938"/>
<dbReference type="KEGG" id="dre:436938"/>
<dbReference type="AGR" id="ZFIN:ZDB-GENE-040718-413"/>
<dbReference type="CTD" id="9988"/>
<dbReference type="ZFIN" id="ZDB-GENE-040718-413">
    <property type="gene designation" value="dmtf1"/>
</dbReference>
<dbReference type="eggNOG" id="KOG0051">
    <property type="taxonomic scope" value="Eukaryota"/>
</dbReference>
<dbReference type="InParanoid" id="Q6DG03"/>
<dbReference type="OMA" id="LQCHTPR"/>
<dbReference type="OrthoDB" id="39591at2759"/>
<dbReference type="PhylomeDB" id="Q6DG03"/>
<dbReference type="TreeFam" id="TF333537"/>
<dbReference type="PRO" id="PR:Q6DG03"/>
<dbReference type="Proteomes" id="UP000000437">
    <property type="component" value="Alternate scaffold 4"/>
</dbReference>
<dbReference type="Proteomes" id="UP000000437">
    <property type="component" value="Chromosome 4"/>
</dbReference>
<dbReference type="Bgee" id="ENSDARG00000025824">
    <property type="expression patterns" value="Expressed in blastula and 20 other cell types or tissues"/>
</dbReference>
<dbReference type="ExpressionAtlas" id="Q6DG03">
    <property type="expression patterns" value="baseline and differential"/>
</dbReference>
<dbReference type="GO" id="GO:0005634">
    <property type="term" value="C:nucleus"/>
    <property type="evidence" value="ECO:0000318"/>
    <property type="project" value="GO_Central"/>
</dbReference>
<dbReference type="GO" id="GO:0000981">
    <property type="term" value="F:DNA-binding transcription factor activity, RNA polymerase II-specific"/>
    <property type="evidence" value="ECO:0000318"/>
    <property type="project" value="GO_Central"/>
</dbReference>
<dbReference type="GO" id="GO:0000978">
    <property type="term" value="F:RNA polymerase II cis-regulatory region sequence-specific DNA binding"/>
    <property type="evidence" value="ECO:0000318"/>
    <property type="project" value="GO_Central"/>
</dbReference>
<dbReference type="GO" id="GO:0006357">
    <property type="term" value="P:regulation of transcription by RNA polymerase II"/>
    <property type="evidence" value="ECO:0000318"/>
    <property type="project" value="GO_Central"/>
</dbReference>
<dbReference type="CDD" id="cd00167">
    <property type="entry name" value="SANT"/>
    <property type="match status" value="3"/>
</dbReference>
<dbReference type="FunFam" id="1.10.10.60:FF:000114">
    <property type="entry name" value="cyclin-D-binding Myb-like transcription factor 1 isoform X1"/>
    <property type="match status" value="1"/>
</dbReference>
<dbReference type="FunFam" id="1.10.10.60:FF:000139">
    <property type="entry name" value="cyclin-D-binding Myb-like transcription factor 1 isoform X2"/>
    <property type="match status" value="1"/>
</dbReference>
<dbReference type="Gene3D" id="1.10.10.60">
    <property type="entry name" value="Homeodomain-like"/>
    <property type="match status" value="2"/>
</dbReference>
<dbReference type="InterPro" id="IPR051651">
    <property type="entry name" value="DMTF1_DNA-bind_reg"/>
</dbReference>
<dbReference type="InterPro" id="IPR046775">
    <property type="entry name" value="DMTF1_N"/>
</dbReference>
<dbReference type="InterPro" id="IPR009057">
    <property type="entry name" value="Homeodomain-like_sf"/>
</dbReference>
<dbReference type="InterPro" id="IPR017930">
    <property type="entry name" value="Myb_dom"/>
</dbReference>
<dbReference type="InterPro" id="IPR001005">
    <property type="entry name" value="SANT/Myb"/>
</dbReference>
<dbReference type="PANTHER" id="PTHR46380">
    <property type="entry name" value="CYCLIN-D-BINDING MYB-LIKE TRANSCRIPTION FACTOR 1"/>
    <property type="match status" value="1"/>
</dbReference>
<dbReference type="PANTHER" id="PTHR46380:SF2">
    <property type="entry name" value="CYCLIN-D-BINDING MYB-LIKE TRANSCRIPTION FACTOR 1"/>
    <property type="match status" value="1"/>
</dbReference>
<dbReference type="Pfam" id="PF20588">
    <property type="entry name" value="DMTF1_N"/>
    <property type="match status" value="1"/>
</dbReference>
<dbReference type="Pfam" id="PF00249">
    <property type="entry name" value="Myb_DNA-binding"/>
    <property type="match status" value="2"/>
</dbReference>
<dbReference type="SMART" id="SM00717">
    <property type="entry name" value="SANT"/>
    <property type="match status" value="4"/>
</dbReference>
<dbReference type="SUPFAM" id="SSF46689">
    <property type="entry name" value="Homeodomain-like"/>
    <property type="match status" value="3"/>
</dbReference>
<dbReference type="PROSITE" id="PS51294">
    <property type="entry name" value="HTH_MYB"/>
    <property type="match status" value="1"/>
</dbReference>
<dbReference type="PROSITE" id="PS50090">
    <property type="entry name" value="MYB_LIKE"/>
    <property type="match status" value="1"/>
</dbReference>
<name>DMTF1_DANRE</name>
<keyword id="KW-0010">Activator</keyword>
<keyword id="KW-0025">Alternative splicing</keyword>
<keyword id="KW-0131">Cell cycle</keyword>
<keyword id="KW-0238">DNA-binding</keyword>
<keyword id="KW-0539">Nucleus</keyword>
<keyword id="KW-1185">Reference proteome</keyword>
<keyword id="KW-0677">Repeat</keyword>
<keyword id="KW-0804">Transcription</keyword>
<keyword id="KW-0805">Transcription regulation</keyword>
<keyword id="KW-0043">Tumor suppressor</keyword>
<organism>
    <name type="scientific">Danio rerio</name>
    <name type="common">Zebrafish</name>
    <name type="synonym">Brachydanio rerio</name>
    <dbReference type="NCBI Taxonomy" id="7955"/>
    <lineage>
        <taxon>Eukaryota</taxon>
        <taxon>Metazoa</taxon>
        <taxon>Chordata</taxon>
        <taxon>Craniata</taxon>
        <taxon>Vertebrata</taxon>
        <taxon>Euteleostomi</taxon>
        <taxon>Actinopterygii</taxon>
        <taxon>Neopterygii</taxon>
        <taxon>Teleostei</taxon>
        <taxon>Ostariophysi</taxon>
        <taxon>Cypriniformes</taxon>
        <taxon>Danionidae</taxon>
        <taxon>Danioninae</taxon>
        <taxon>Danio</taxon>
    </lineage>
</organism>
<sequence length="645" mass="71268">MNTGDVPATVTLESVNSVTFTQDTDGNIILHCPQNDGEDLGSDETTEPVHKRIRLSSEDGEDPQDSASTEYSVVTLPITDGDESFEVTMTATEMRDEELESDDLSETTGKDSSAQKKGEDVSAVSQAWFTTKEDKDTLVNKGHKWKQGMWSKEEIDLLMTNIELYLKNRGIQDPAEIIFEMSKEERKDFYRSIACGLNRPLFAVYRRVLRMYDNRNHVGKYTDEEINKLKELRQKHGNDWATIGSALGRSASSVKDRCRLMKDTCNTGKWTEEEERRLAEVVHELTGTEAGDVVTQGVSWASVAELVGTRSEKQCRSKWLNYLNWKQSGGTEWTKEDDINLVRRIAELEVEDENEINWDILASGWSSVRSPQWLRSKWWTIKRQVANHKELPFPVLLKGLQDVVEAPPSTMNKVVVVGSRSANASPSPVTALQIPVQIPVQITHVSSSDGSSGTSDSETITLNSGALQTFELLPSFHLQPTGTPGTYFLQTGTNQSLPLTLSANPTVTLTAAASPSSPDQIILHSLTTDTENVTVQMSHPGIIIQTVTSEDLADPLGQSELEGEQVLVKEEPSENQTNPAIEEPSEEQSKQGEKTLDSSKVVETVLMVPSPGSFIPTNEDISSDSVLPLGTLTDPILENQEEGSN</sequence>
<protein>
    <recommendedName>
        <fullName>Cyclin-D-binding Myb-like transcription factor 1</fullName>
    </recommendedName>
</protein>
<accession>Q6DG03</accession>
<accession>Q5RGE9</accession>
<reference key="1">
    <citation type="journal article" date="2013" name="Nature">
        <title>The zebrafish reference genome sequence and its relationship to the human genome.</title>
        <authorList>
            <person name="Howe K."/>
            <person name="Clark M.D."/>
            <person name="Torroja C.F."/>
            <person name="Torrance J."/>
            <person name="Berthelot C."/>
            <person name="Muffato M."/>
            <person name="Collins J.E."/>
            <person name="Humphray S."/>
            <person name="McLaren K."/>
            <person name="Matthews L."/>
            <person name="McLaren S."/>
            <person name="Sealy I."/>
            <person name="Caccamo M."/>
            <person name="Churcher C."/>
            <person name="Scott C."/>
            <person name="Barrett J.C."/>
            <person name="Koch R."/>
            <person name="Rauch G.J."/>
            <person name="White S."/>
            <person name="Chow W."/>
            <person name="Kilian B."/>
            <person name="Quintais L.T."/>
            <person name="Guerra-Assuncao J.A."/>
            <person name="Zhou Y."/>
            <person name="Gu Y."/>
            <person name="Yen J."/>
            <person name="Vogel J.H."/>
            <person name="Eyre T."/>
            <person name="Redmond S."/>
            <person name="Banerjee R."/>
            <person name="Chi J."/>
            <person name="Fu B."/>
            <person name="Langley E."/>
            <person name="Maguire S.F."/>
            <person name="Laird G.K."/>
            <person name="Lloyd D."/>
            <person name="Kenyon E."/>
            <person name="Donaldson S."/>
            <person name="Sehra H."/>
            <person name="Almeida-King J."/>
            <person name="Loveland J."/>
            <person name="Trevanion S."/>
            <person name="Jones M."/>
            <person name="Quail M."/>
            <person name="Willey D."/>
            <person name="Hunt A."/>
            <person name="Burton J."/>
            <person name="Sims S."/>
            <person name="McLay K."/>
            <person name="Plumb B."/>
            <person name="Davis J."/>
            <person name="Clee C."/>
            <person name="Oliver K."/>
            <person name="Clark R."/>
            <person name="Riddle C."/>
            <person name="Elliot D."/>
            <person name="Threadgold G."/>
            <person name="Harden G."/>
            <person name="Ware D."/>
            <person name="Begum S."/>
            <person name="Mortimore B."/>
            <person name="Kerry G."/>
            <person name="Heath P."/>
            <person name="Phillimore B."/>
            <person name="Tracey A."/>
            <person name="Corby N."/>
            <person name="Dunn M."/>
            <person name="Johnson C."/>
            <person name="Wood J."/>
            <person name="Clark S."/>
            <person name="Pelan S."/>
            <person name="Griffiths G."/>
            <person name="Smith M."/>
            <person name="Glithero R."/>
            <person name="Howden P."/>
            <person name="Barker N."/>
            <person name="Lloyd C."/>
            <person name="Stevens C."/>
            <person name="Harley J."/>
            <person name="Holt K."/>
            <person name="Panagiotidis G."/>
            <person name="Lovell J."/>
            <person name="Beasley H."/>
            <person name="Henderson C."/>
            <person name="Gordon D."/>
            <person name="Auger K."/>
            <person name="Wright D."/>
            <person name="Collins J."/>
            <person name="Raisen C."/>
            <person name="Dyer L."/>
            <person name="Leung K."/>
            <person name="Robertson L."/>
            <person name="Ambridge K."/>
            <person name="Leongamornlert D."/>
            <person name="McGuire S."/>
            <person name="Gilderthorp R."/>
            <person name="Griffiths C."/>
            <person name="Manthravadi D."/>
            <person name="Nichol S."/>
            <person name="Barker G."/>
            <person name="Whitehead S."/>
            <person name="Kay M."/>
            <person name="Brown J."/>
            <person name="Murnane C."/>
            <person name="Gray E."/>
            <person name="Humphries M."/>
            <person name="Sycamore N."/>
            <person name="Barker D."/>
            <person name="Saunders D."/>
            <person name="Wallis J."/>
            <person name="Babbage A."/>
            <person name="Hammond S."/>
            <person name="Mashreghi-Mohammadi M."/>
            <person name="Barr L."/>
            <person name="Martin S."/>
            <person name="Wray P."/>
            <person name="Ellington A."/>
            <person name="Matthews N."/>
            <person name="Ellwood M."/>
            <person name="Woodmansey R."/>
            <person name="Clark G."/>
            <person name="Cooper J."/>
            <person name="Tromans A."/>
            <person name="Grafham D."/>
            <person name="Skuce C."/>
            <person name="Pandian R."/>
            <person name="Andrews R."/>
            <person name="Harrison E."/>
            <person name="Kimberley A."/>
            <person name="Garnett J."/>
            <person name="Fosker N."/>
            <person name="Hall R."/>
            <person name="Garner P."/>
            <person name="Kelly D."/>
            <person name="Bird C."/>
            <person name="Palmer S."/>
            <person name="Gehring I."/>
            <person name="Berger A."/>
            <person name="Dooley C.M."/>
            <person name="Ersan-Urun Z."/>
            <person name="Eser C."/>
            <person name="Geiger H."/>
            <person name="Geisler M."/>
            <person name="Karotki L."/>
            <person name="Kirn A."/>
            <person name="Konantz J."/>
            <person name="Konantz M."/>
            <person name="Oberlander M."/>
            <person name="Rudolph-Geiger S."/>
            <person name="Teucke M."/>
            <person name="Lanz C."/>
            <person name="Raddatz G."/>
            <person name="Osoegawa K."/>
            <person name="Zhu B."/>
            <person name="Rapp A."/>
            <person name="Widaa S."/>
            <person name="Langford C."/>
            <person name="Yang F."/>
            <person name="Schuster S.C."/>
            <person name="Carter N.P."/>
            <person name="Harrow J."/>
            <person name="Ning Z."/>
            <person name="Herrero J."/>
            <person name="Searle S.M."/>
            <person name="Enright A."/>
            <person name="Geisler R."/>
            <person name="Plasterk R.H."/>
            <person name="Lee C."/>
            <person name="Westerfield M."/>
            <person name="de Jong P.J."/>
            <person name="Zon L.I."/>
            <person name="Postlethwait J.H."/>
            <person name="Nusslein-Volhard C."/>
            <person name="Hubbard T.J."/>
            <person name="Roest Crollius H."/>
            <person name="Rogers J."/>
            <person name="Stemple D.L."/>
        </authorList>
    </citation>
    <scope>NUCLEOTIDE SEQUENCE [LARGE SCALE GENOMIC DNA]</scope>
    <source>
        <strain>Tuebingen</strain>
    </source>
</reference>
<reference key="2">
    <citation type="submission" date="2004-07" db="EMBL/GenBank/DDBJ databases">
        <authorList>
            <consortium name="NIH - Zebrafish Gene Collection (ZGC) project"/>
        </authorList>
    </citation>
    <scope>NUCLEOTIDE SEQUENCE [LARGE SCALE MRNA] (ISOFORM 1)</scope>
</reference>
<comment type="function">
    <text evidence="1">Transcriptional activator which activates the CDKN2A/ARF locus in response to Ras-Raf signaling, thereby promoting p53/TP53-dependent growth arrest. Binds to the consensus sequence 5'-CCCG[GT]ATGT-3'.</text>
</comment>
<comment type="subcellular location">
    <subcellularLocation>
        <location evidence="3">Nucleus</location>
    </subcellularLocation>
</comment>
<comment type="alternative products">
    <event type="alternative splicing"/>
    <isoform>
        <id>Q6DG03-1</id>
        <name>1</name>
        <sequence type="displayed"/>
    </isoform>
    <isoform>
        <id>Q6DG03-2</id>
        <name>2</name>
        <sequence type="described" ref="VSP_034966 VSP_034967 VSP_034968"/>
    </isoform>
</comment>
<comment type="similarity">
    <text evidence="5">Belongs to the DMTF1 family.</text>
</comment>
<evidence type="ECO:0000250" key="1"/>
<evidence type="ECO:0000255" key="2">
    <source>
        <dbReference type="PROSITE-ProRule" id="PRU00133"/>
    </source>
</evidence>
<evidence type="ECO:0000255" key="3">
    <source>
        <dbReference type="PROSITE-ProRule" id="PRU00625"/>
    </source>
</evidence>
<evidence type="ECO:0000256" key="4">
    <source>
        <dbReference type="SAM" id="MobiDB-lite"/>
    </source>
</evidence>
<evidence type="ECO:0000305" key="5"/>
<gene>
    <name type="primary">dmtf1</name>
    <name type="ORF">si:dkey-153k10.8</name>
    <name type="ORF">zgc:92448</name>
</gene>
<feature type="chain" id="PRO_0000323732" description="Cyclin-D-binding Myb-like transcription factor 1">
    <location>
        <begin position="1"/>
        <end position="645"/>
    </location>
</feature>
<feature type="domain" description="Myb-like 1" evidence="2">
    <location>
        <begin position="219"/>
        <end position="257"/>
    </location>
</feature>
<feature type="domain" description="HTH myb-type" evidence="3">
    <location>
        <begin position="262"/>
        <end position="327"/>
    </location>
</feature>
<feature type="domain" description="Myb-like 2" evidence="2">
    <location>
        <begin position="333"/>
        <end position="382"/>
    </location>
</feature>
<feature type="DNA-binding region" description="H-T-H motif" evidence="3">
    <location>
        <begin position="300"/>
        <end position="323"/>
    </location>
</feature>
<feature type="region of interest" description="Disordered" evidence="4">
    <location>
        <begin position="34"/>
        <end position="71"/>
    </location>
</feature>
<feature type="region of interest" description="Disordered" evidence="4">
    <location>
        <begin position="95"/>
        <end position="119"/>
    </location>
</feature>
<feature type="region of interest" description="Disordered" evidence="4">
    <location>
        <begin position="568"/>
        <end position="645"/>
    </location>
</feature>
<feature type="compositionally biased region" description="Acidic residues" evidence="4">
    <location>
        <begin position="36"/>
        <end position="46"/>
    </location>
</feature>
<feature type="compositionally biased region" description="Acidic residues" evidence="4">
    <location>
        <begin position="95"/>
        <end position="105"/>
    </location>
</feature>
<feature type="compositionally biased region" description="Basic and acidic residues" evidence="4">
    <location>
        <begin position="587"/>
        <end position="597"/>
    </location>
</feature>
<feature type="compositionally biased region" description="Polar residues" evidence="4">
    <location>
        <begin position="615"/>
        <end position="625"/>
    </location>
</feature>
<feature type="splice variant" id="VSP_034966" description="In isoform 2." evidence="5">
    <original>V</original>
    <variation>A</variation>
    <location>
        <position position="395"/>
    </location>
</feature>
<feature type="splice variant" id="VSP_034967" description="In isoform 2." evidence="5">
    <location>
        <begin position="396"/>
        <end position="446"/>
    </location>
</feature>
<feature type="splice variant" id="VSP_034968" description="In isoform 2." evidence="5">
    <location>
        <begin position="528"/>
        <end position="531"/>
    </location>
</feature>